<feature type="chain" id="PRO_0000185959" description="Glutathione S-transferase D7">
    <location>
        <begin position="1"/>
        <end position="224"/>
    </location>
</feature>
<feature type="domain" description="GST N-terminal">
    <location>
        <begin position="2"/>
        <end position="83"/>
    </location>
</feature>
<feature type="domain" description="GST C-terminal">
    <location>
        <begin position="90"/>
        <end position="210"/>
    </location>
</feature>
<feature type="binding site" evidence="1">
    <location>
        <begin position="53"/>
        <end position="55"/>
    </location>
    <ligand>
        <name>glutathione</name>
        <dbReference type="ChEBI" id="CHEBI:57925"/>
    </ligand>
</feature>
<feature type="binding site" evidence="1">
    <location>
        <begin position="67"/>
        <end position="69"/>
    </location>
    <ligand>
        <name>glutathione</name>
        <dbReference type="ChEBI" id="CHEBI:57925"/>
    </ligand>
</feature>
<organism>
    <name type="scientific">Drosophila melanogaster</name>
    <name type="common">Fruit fly</name>
    <dbReference type="NCBI Taxonomy" id="7227"/>
    <lineage>
        <taxon>Eukaryota</taxon>
        <taxon>Metazoa</taxon>
        <taxon>Ecdysozoa</taxon>
        <taxon>Arthropoda</taxon>
        <taxon>Hexapoda</taxon>
        <taxon>Insecta</taxon>
        <taxon>Pterygota</taxon>
        <taxon>Neoptera</taxon>
        <taxon>Endopterygota</taxon>
        <taxon>Diptera</taxon>
        <taxon>Brachycera</taxon>
        <taxon>Muscomorpha</taxon>
        <taxon>Ephydroidea</taxon>
        <taxon>Drosophilidae</taxon>
        <taxon>Drosophila</taxon>
        <taxon>Sophophora</taxon>
    </lineage>
</organism>
<keyword id="KW-0216">Detoxification</keyword>
<keyword id="KW-1185">Reference proteome</keyword>
<keyword id="KW-0808">Transferase</keyword>
<accession>Q9VG93</accession>
<accession>Q4V3S1</accession>
<accession>Q9TX87</accession>
<evidence type="ECO:0000250" key="1"/>
<evidence type="ECO:0000250" key="2">
    <source>
        <dbReference type="UniProtKB" id="P30711"/>
    </source>
</evidence>
<evidence type="ECO:0000269" key="3">
    <source>
    </source>
</evidence>
<evidence type="ECO:0000303" key="4">
    <source>
    </source>
</evidence>
<evidence type="ECO:0000305" key="5"/>
<evidence type="ECO:0000312" key="6">
    <source>
        <dbReference type="FlyBase" id="FBgn0010043"/>
    </source>
</evidence>
<protein>
    <recommendedName>
        <fullName evidence="4">Glutathione S-transferase D7</fullName>
        <ecNumber evidence="3">2.5.1.18</ecNumber>
    </recommendedName>
</protein>
<sequence>MPNLDLYNFPMAPASRAIQMVAKALGLELNSKLINTMEGDQLKPEFVRINPQHTIPTLVDNGFVIWESRAIAVYLVEKYGKPDSPLYPNDPQKRALINQRLYFDMGTLYDALTKYFFLIFRTGKFGDQEALDKVNSAFGFLNTFLEGQDFVAGSQLTVADIVILATVSTVEWFSFDLSKFPNVERWLKNAPKVTPGWEQNLESLQQGKKFLQDLQAAKEKEVKA</sequence>
<comment type="function">
    <text evidence="3">Conjugation of reduced glutathione to a wide number of exogenous and endogenous hydrophobic electrophiles (PubMed:22082028). May be involved in detoxification (PubMed:22082028).</text>
</comment>
<comment type="catalytic activity">
    <reaction evidence="3">
        <text>RX + glutathione = an S-substituted glutathione + a halide anion + H(+)</text>
        <dbReference type="Rhea" id="RHEA:16437"/>
        <dbReference type="ChEBI" id="CHEBI:15378"/>
        <dbReference type="ChEBI" id="CHEBI:16042"/>
        <dbReference type="ChEBI" id="CHEBI:17792"/>
        <dbReference type="ChEBI" id="CHEBI:57925"/>
        <dbReference type="ChEBI" id="CHEBI:90779"/>
        <dbReference type="EC" id="2.5.1.18"/>
    </reaction>
</comment>
<comment type="biophysicochemical properties">
    <kinetics>
        <KM evidence="3">1.68 mM for glutathione</KM>
        <KM evidence="3">1.16 mM for 1-chloro-2,4-dinitrobenzene</KM>
        <Vmax evidence="3">9.76 umol/min/mg enzyme with 1-chloro-2,4-dinitrobenzene as substrate</Vmax>
        <Vmax evidence="3">0.66 umol/min/mg enzyme with 4-hydroxy-2-nonenal as substrate</Vmax>
        <Vmax evidence="3">41.5 nmol/min/mg enzyme with adrenochrome as substrate</Vmax>
        <Vmax evidence="3">0.16 umol/min/mg enzyme with phenethyl isothiocyanate as substrate</Vmax>
    </kinetics>
</comment>
<comment type="subunit">
    <text evidence="2">Homodimer.</text>
</comment>
<comment type="interaction">
    <interactant intactId="EBI-2110499">
        <id>Q9VG93</id>
    </interactant>
    <interactant intactId="EBI-97726">
        <id>P20432</id>
        <label>GstD1</label>
    </interactant>
    <organismsDiffer>false</organismsDiffer>
    <experiments>3</experiments>
</comment>
<comment type="interaction">
    <interactant intactId="EBI-2110499">
        <id>Q9VG93</id>
    </interactant>
    <interactant intactId="EBI-149969">
        <id>Q9VGA1</id>
        <label>GstD10</label>
    </interactant>
    <organismsDiffer>false</organismsDiffer>
    <experiments>3</experiments>
</comment>
<comment type="interaction">
    <interactant intactId="EBI-2110499">
        <id>Q9VG93</id>
    </interactant>
    <interactant intactId="EBI-15116229">
        <id>Q9VG92</id>
        <label>GstD8</label>
    </interactant>
    <organismsDiffer>false</organismsDiffer>
    <experiments>3</experiments>
</comment>
<comment type="similarity">
    <text evidence="4">Belongs to the GST superfamily. Delta family.</text>
</comment>
<comment type="sequence caution" evidence="5">
    <conflict type="frameshift">
        <sequence resource="EMBL" id="M97702"/>
    </conflict>
</comment>
<name>GSTD7_DROME</name>
<reference key="1">
    <citation type="journal article" date="1993" name="J. Biol. Chem.">
        <title>The glutathione S-transferase D genes. A divergently organized, intronless gene family in Drosophila melanogaster.</title>
        <authorList>
            <person name="Toung Y.-P.S."/>
            <person name="Hsieh T.-S."/>
            <person name="Tu C.-P.D."/>
        </authorList>
    </citation>
    <scope>PRELIMINARY NUCLEOTIDE SEQUENCE [GENOMIC DNA]</scope>
</reference>
<reference key="2">
    <citation type="journal article" date="2000" name="Science">
        <title>The genome sequence of Drosophila melanogaster.</title>
        <authorList>
            <person name="Adams M.D."/>
            <person name="Celniker S.E."/>
            <person name="Holt R.A."/>
            <person name="Evans C.A."/>
            <person name="Gocayne J.D."/>
            <person name="Amanatides P.G."/>
            <person name="Scherer S.E."/>
            <person name="Li P.W."/>
            <person name="Hoskins R.A."/>
            <person name="Galle R.F."/>
            <person name="George R.A."/>
            <person name="Lewis S.E."/>
            <person name="Richards S."/>
            <person name="Ashburner M."/>
            <person name="Henderson S.N."/>
            <person name="Sutton G.G."/>
            <person name="Wortman J.R."/>
            <person name="Yandell M.D."/>
            <person name="Zhang Q."/>
            <person name="Chen L.X."/>
            <person name="Brandon R.C."/>
            <person name="Rogers Y.-H.C."/>
            <person name="Blazej R.G."/>
            <person name="Champe M."/>
            <person name="Pfeiffer B.D."/>
            <person name="Wan K.H."/>
            <person name="Doyle C."/>
            <person name="Baxter E.G."/>
            <person name="Helt G."/>
            <person name="Nelson C.R."/>
            <person name="Miklos G.L.G."/>
            <person name="Abril J.F."/>
            <person name="Agbayani A."/>
            <person name="An H.-J."/>
            <person name="Andrews-Pfannkoch C."/>
            <person name="Baldwin D."/>
            <person name="Ballew R.M."/>
            <person name="Basu A."/>
            <person name="Baxendale J."/>
            <person name="Bayraktaroglu L."/>
            <person name="Beasley E.M."/>
            <person name="Beeson K.Y."/>
            <person name="Benos P.V."/>
            <person name="Berman B.P."/>
            <person name="Bhandari D."/>
            <person name="Bolshakov S."/>
            <person name="Borkova D."/>
            <person name="Botchan M.R."/>
            <person name="Bouck J."/>
            <person name="Brokstein P."/>
            <person name="Brottier P."/>
            <person name="Burtis K.C."/>
            <person name="Busam D.A."/>
            <person name="Butler H."/>
            <person name="Cadieu E."/>
            <person name="Center A."/>
            <person name="Chandra I."/>
            <person name="Cherry J.M."/>
            <person name="Cawley S."/>
            <person name="Dahlke C."/>
            <person name="Davenport L.B."/>
            <person name="Davies P."/>
            <person name="de Pablos B."/>
            <person name="Delcher A."/>
            <person name="Deng Z."/>
            <person name="Mays A.D."/>
            <person name="Dew I."/>
            <person name="Dietz S.M."/>
            <person name="Dodson K."/>
            <person name="Doup L.E."/>
            <person name="Downes M."/>
            <person name="Dugan-Rocha S."/>
            <person name="Dunkov B.C."/>
            <person name="Dunn P."/>
            <person name="Durbin K.J."/>
            <person name="Evangelista C.C."/>
            <person name="Ferraz C."/>
            <person name="Ferriera S."/>
            <person name="Fleischmann W."/>
            <person name="Fosler C."/>
            <person name="Gabrielian A.E."/>
            <person name="Garg N.S."/>
            <person name="Gelbart W.M."/>
            <person name="Glasser K."/>
            <person name="Glodek A."/>
            <person name="Gong F."/>
            <person name="Gorrell J.H."/>
            <person name="Gu Z."/>
            <person name="Guan P."/>
            <person name="Harris M."/>
            <person name="Harris N.L."/>
            <person name="Harvey D.A."/>
            <person name="Heiman T.J."/>
            <person name="Hernandez J.R."/>
            <person name="Houck J."/>
            <person name="Hostin D."/>
            <person name="Houston K.A."/>
            <person name="Howland T.J."/>
            <person name="Wei M.-H."/>
            <person name="Ibegwam C."/>
            <person name="Jalali M."/>
            <person name="Kalush F."/>
            <person name="Karpen G.H."/>
            <person name="Ke Z."/>
            <person name="Kennison J.A."/>
            <person name="Ketchum K.A."/>
            <person name="Kimmel B.E."/>
            <person name="Kodira C.D."/>
            <person name="Kraft C.L."/>
            <person name="Kravitz S."/>
            <person name="Kulp D."/>
            <person name="Lai Z."/>
            <person name="Lasko P."/>
            <person name="Lei Y."/>
            <person name="Levitsky A.A."/>
            <person name="Li J.H."/>
            <person name="Li Z."/>
            <person name="Liang Y."/>
            <person name="Lin X."/>
            <person name="Liu X."/>
            <person name="Mattei B."/>
            <person name="McIntosh T.C."/>
            <person name="McLeod M.P."/>
            <person name="McPherson D."/>
            <person name="Merkulov G."/>
            <person name="Milshina N.V."/>
            <person name="Mobarry C."/>
            <person name="Morris J."/>
            <person name="Moshrefi A."/>
            <person name="Mount S.M."/>
            <person name="Moy M."/>
            <person name="Murphy B."/>
            <person name="Murphy L."/>
            <person name="Muzny D.M."/>
            <person name="Nelson D.L."/>
            <person name="Nelson D.R."/>
            <person name="Nelson K.A."/>
            <person name="Nixon K."/>
            <person name="Nusskern D.R."/>
            <person name="Pacleb J.M."/>
            <person name="Palazzolo M."/>
            <person name="Pittman G.S."/>
            <person name="Pan S."/>
            <person name="Pollard J."/>
            <person name="Puri V."/>
            <person name="Reese M.G."/>
            <person name="Reinert K."/>
            <person name="Remington K."/>
            <person name="Saunders R.D.C."/>
            <person name="Scheeler F."/>
            <person name="Shen H."/>
            <person name="Shue B.C."/>
            <person name="Siden-Kiamos I."/>
            <person name="Simpson M."/>
            <person name="Skupski M.P."/>
            <person name="Smith T.J."/>
            <person name="Spier E."/>
            <person name="Spradling A.C."/>
            <person name="Stapleton M."/>
            <person name="Strong R."/>
            <person name="Sun E."/>
            <person name="Svirskas R."/>
            <person name="Tector C."/>
            <person name="Turner R."/>
            <person name="Venter E."/>
            <person name="Wang A.H."/>
            <person name="Wang X."/>
            <person name="Wang Z.-Y."/>
            <person name="Wassarman D.A."/>
            <person name="Weinstock G.M."/>
            <person name="Weissenbach J."/>
            <person name="Williams S.M."/>
            <person name="Woodage T."/>
            <person name="Worley K.C."/>
            <person name="Wu D."/>
            <person name="Yang S."/>
            <person name="Yao Q.A."/>
            <person name="Ye J."/>
            <person name="Yeh R.-F."/>
            <person name="Zaveri J.S."/>
            <person name="Zhan M."/>
            <person name="Zhang G."/>
            <person name="Zhao Q."/>
            <person name="Zheng L."/>
            <person name="Zheng X.H."/>
            <person name="Zhong F.N."/>
            <person name="Zhong W."/>
            <person name="Zhou X."/>
            <person name="Zhu S.C."/>
            <person name="Zhu X."/>
            <person name="Smith H.O."/>
            <person name="Gibbs R.A."/>
            <person name="Myers E.W."/>
            <person name="Rubin G.M."/>
            <person name="Venter J.C."/>
        </authorList>
    </citation>
    <scope>NUCLEOTIDE SEQUENCE [LARGE SCALE GENOMIC DNA]</scope>
    <source>
        <strain>Berkeley</strain>
    </source>
</reference>
<reference key="3">
    <citation type="journal article" date="2002" name="Genome Biol.">
        <title>Annotation of the Drosophila melanogaster euchromatic genome: a systematic review.</title>
        <authorList>
            <person name="Misra S."/>
            <person name="Crosby M.A."/>
            <person name="Mungall C.J."/>
            <person name="Matthews B.B."/>
            <person name="Campbell K.S."/>
            <person name="Hradecky P."/>
            <person name="Huang Y."/>
            <person name="Kaminker J.S."/>
            <person name="Millburn G.H."/>
            <person name="Prochnik S.E."/>
            <person name="Smith C.D."/>
            <person name="Tupy J.L."/>
            <person name="Whitfield E.J."/>
            <person name="Bayraktaroglu L."/>
            <person name="Berman B.P."/>
            <person name="Bettencourt B.R."/>
            <person name="Celniker S.E."/>
            <person name="de Grey A.D.N.J."/>
            <person name="Drysdale R.A."/>
            <person name="Harris N.L."/>
            <person name="Richter J."/>
            <person name="Russo S."/>
            <person name="Schroeder A.J."/>
            <person name="Shu S.Q."/>
            <person name="Stapleton M."/>
            <person name="Yamada C."/>
            <person name="Ashburner M."/>
            <person name="Gelbart W.M."/>
            <person name="Rubin G.M."/>
            <person name="Lewis S.E."/>
        </authorList>
    </citation>
    <scope>GENOME REANNOTATION</scope>
    <source>
        <strain>Berkeley</strain>
    </source>
</reference>
<reference key="4">
    <citation type="submission" date="2005-05" db="EMBL/GenBank/DDBJ databases">
        <authorList>
            <person name="Stapleton M."/>
            <person name="Carlson J.W."/>
            <person name="Chavez C."/>
            <person name="Frise E."/>
            <person name="George R.A."/>
            <person name="Pacleb J.M."/>
            <person name="Park S."/>
            <person name="Wan K.H."/>
            <person name="Yu C."/>
            <person name="Celniker S.E."/>
        </authorList>
    </citation>
    <scope>NUCLEOTIDE SEQUENCE [LARGE SCALE MRNA]</scope>
    <source>
        <strain>Berkeley</strain>
    </source>
</reference>
<reference key="5">
    <citation type="journal article" date="2012" name="Biochem. J.">
        <title>A preliminary characterization of the cytosolic glutathione transferase proteome from Drosophila melanogaster.</title>
        <authorList>
            <person name="Saisawang C."/>
            <person name="Wongsantichon J."/>
            <person name="Ketterman A.J."/>
        </authorList>
    </citation>
    <scope>FUNCTION</scope>
    <scope>CATALYTIC ACTIVITY</scope>
    <scope>BIOPHYSICOCHEMICAL PROPERTIES</scope>
</reference>
<dbReference type="EC" id="2.5.1.18" evidence="3"/>
<dbReference type="EMBL" id="M97702">
    <property type="status" value="NOT_ANNOTATED_CDS"/>
    <property type="molecule type" value="Genomic_DNA"/>
</dbReference>
<dbReference type="EMBL" id="AE014297">
    <property type="protein sequence ID" value="AAF54792.1"/>
    <property type="molecule type" value="Genomic_DNA"/>
</dbReference>
<dbReference type="EMBL" id="BT023285">
    <property type="protein sequence ID" value="AAY55701.1"/>
    <property type="molecule type" value="mRNA"/>
</dbReference>
<dbReference type="PIR" id="H46681">
    <property type="entry name" value="H46681"/>
</dbReference>
<dbReference type="RefSeq" id="NP_525114.1">
    <property type="nucleotide sequence ID" value="NM_080375.3"/>
</dbReference>
<dbReference type="SMR" id="Q9VG93"/>
<dbReference type="BioGRID" id="71337">
    <property type="interactions" value="7"/>
</dbReference>
<dbReference type="FunCoup" id="Q9VG93">
    <property type="interactions" value="261"/>
</dbReference>
<dbReference type="IntAct" id="Q9VG93">
    <property type="interactions" value="14"/>
</dbReference>
<dbReference type="STRING" id="7227.FBpp0082046"/>
<dbReference type="GlyGen" id="Q9VG93">
    <property type="glycosylation" value="1 site"/>
</dbReference>
<dbReference type="PaxDb" id="7227-FBpp0082046"/>
<dbReference type="DNASU" id="48340"/>
<dbReference type="EnsemblMetazoa" id="FBtr0082574">
    <property type="protein sequence ID" value="FBpp0082046"/>
    <property type="gene ID" value="FBgn0010043"/>
</dbReference>
<dbReference type="GeneID" id="48340"/>
<dbReference type="KEGG" id="dme:Dmel_CG4371"/>
<dbReference type="AGR" id="FB:FBgn0010043"/>
<dbReference type="CTD" id="48340"/>
<dbReference type="FlyBase" id="FBgn0010043">
    <property type="gene designation" value="GstD7"/>
</dbReference>
<dbReference type="VEuPathDB" id="VectorBase:FBgn0010043"/>
<dbReference type="eggNOG" id="KOG0867">
    <property type="taxonomic scope" value="Eukaryota"/>
</dbReference>
<dbReference type="GeneTree" id="ENSGT00940000164816"/>
<dbReference type="HOGENOM" id="CLU_011226_2_1_1"/>
<dbReference type="InParanoid" id="Q9VG93"/>
<dbReference type="OMA" id="DLYNFPM"/>
<dbReference type="OrthoDB" id="2309723at2759"/>
<dbReference type="PhylomeDB" id="Q9VG93"/>
<dbReference type="SABIO-RK" id="Q9VG93"/>
<dbReference type="BioGRID-ORCS" id="48340">
    <property type="hits" value="0 hits in 1 CRISPR screen"/>
</dbReference>
<dbReference type="GenomeRNAi" id="48340"/>
<dbReference type="PRO" id="PR:Q9VG93"/>
<dbReference type="Proteomes" id="UP000000803">
    <property type="component" value="Chromosome 3R"/>
</dbReference>
<dbReference type="Bgee" id="FBgn0010043">
    <property type="expression patterns" value="Expressed in midgut and 17 other cell types or tissues"/>
</dbReference>
<dbReference type="GO" id="GO:0005737">
    <property type="term" value="C:cytoplasm"/>
    <property type="evidence" value="ECO:0000250"/>
    <property type="project" value="FlyBase"/>
</dbReference>
<dbReference type="GO" id="GO:0004364">
    <property type="term" value="F:glutathione transferase activity"/>
    <property type="evidence" value="ECO:0000314"/>
    <property type="project" value="FlyBase"/>
</dbReference>
<dbReference type="GO" id="GO:0006749">
    <property type="term" value="P:glutathione metabolic process"/>
    <property type="evidence" value="ECO:0000314"/>
    <property type="project" value="FlyBase"/>
</dbReference>
<dbReference type="GO" id="GO:0009636">
    <property type="term" value="P:response to toxic substance"/>
    <property type="evidence" value="ECO:0007669"/>
    <property type="project" value="UniProtKB-KW"/>
</dbReference>
<dbReference type="CDD" id="cd03177">
    <property type="entry name" value="GST_C_Delta_Epsilon"/>
    <property type="match status" value="1"/>
</dbReference>
<dbReference type="CDD" id="cd03045">
    <property type="entry name" value="GST_N_Delta_Epsilon"/>
    <property type="match status" value="1"/>
</dbReference>
<dbReference type="FunFam" id="3.40.30.10:FF:000034">
    <property type="entry name" value="glutathione S-transferase 1"/>
    <property type="match status" value="1"/>
</dbReference>
<dbReference type="FunFam" id="1.20.1050.10:FF:000007">
    <property type="entry name" value="Glutathione S-transferase 1-1"/>
    <property type="match status" value="1"/>
</dbReference>
<dbReference type="Gene3D" id="1.20.1050.10">
    <property type="match status" value="1"/>
</dbReference>
<dbReference type="Gene3D" id="3.40.30.10">
    <property type="entry name" value="Glutaredoxin"/>
    <property type="match status" value="1"/>
</dbReference>
<dbReference type="InterPro" id="IPR010987">
    <property type="entry name" value="Glutathione-S-Trfase_C-like"/>
</dbReference>
<dbReference type="InterPro" id="IPR036282">
    <property type="entry name" value="Glutathione-S-Trfase_C_sf"/>
</dbReference>
<dbReference type="InterPro" id="IPR040079">
    <property type="entry name" value="Glutathione_S-Trfase"/>
</dbReference>
<dbReference type="InterPro" id="IPR004045">
    <property type="entry name" value="Glutathione_S-Trfase_N"/>
</dbReference>
<dbReference type="InterPro" id="IPR004046">
    <property type="entry name" value="GST_C"/>
</dbReference>
<dbReference type="InterPro" id="IPR036249">
    <property type="entry name" value="Thioredoxin-like_sf"/>
</dbReference>
<dbReference type="PANTHER" id="PTHR43969">
    <property type="entry name" value="GLUTATHIONE S TRANSFERASE D10, ISOFORM A-RELATED"/>
    <property type="match status" value="1"/>
</dbReference>
<dbReference type="PANTHER" id="PTHR43969:SF9">
    <property type="entry name" value="GLUTATHIONE S TRANSFERASE D10, ISOFORM A-RELATED"/>
    <property type="match status" value="1"/>
</dbReference>
<dbReference type="Pfam" id="PF00043">
    <property type="entry name" value="GST_C"/>
    <property type="match status" value="1"/>
</dbReference>
<dbReference type="Pfam" id="PF02798">
    <property type="entry name" value="GST_N"/>
    <property type="match status" value="1"/>
</dbReference>
<dbReference type="SFLD" id="SFLDS00019">
    <property type="entry name" value="Glutathione_Transferase_(cytos"/>
    <property type="match status" value="1"/>
</dbReference>
<dbReference type="SFLD" id="SFLDG00358">
    <property type="entry name" value="Main_(cytGST)"/>
    <property type="match status" value="1"/>
</dbReference>
<dbReference type="SUPFAM" id="SSF47616">
    <property type="entry name" value="GST C-terminal domain-like"/>
    <property type="match status" value="1"/>
</dbReference>
<dbReference type="SUPFAM" id="SSF52833">
    <property type="entry name" value="Thioredoxin-like"/>
    <property type="match status" value="1"/>
</dbReference>
<dbReference type="PROSITE" id="PS50405">
    <property type="entry name" value="GST_CTER"/>
    <property type="match status" value="1"/>
</dbReference>
<dbReference type="PROSITE" id="PS50404">
    <property type="entry name" value="GST_NTER"/>
    <property type="match status" value="1"/>
</dbReference>
<proteinExistence type="evidence at protein level"/>
<gene>
    <name evidence="6" type="primary">GstD7</name>
    <name type="synonym">gstD26</name>
    <name evidence="6" type="synonym">GSTD7-7</name>
    <name evidence="6" type="ORF">CG4371</name>
</gene>